<proteinExistence type="inferred from homology"/>
<evidence type="ECO:0000255" key="1">
    <source>
        <dbReference type="HAMAP-Rule" id="MF_01283"/>
    </source>
</evidence>
<gene>
    <name evidence="1" type="primary">ribBA</name>
    <name type="ordered locus">APJL_0404</name>
</gene>
<protein>
    <recommendedName>
        <fullName evidence="1">Riboflavin biosynthesis protein RibBA</fullName>
    </recommendedName>
    <domain>
        <recommendedName>
            <fullName evidence="1">3,4-dihydroxy-2-butanone 4-phosphate synthase</fullName>
            <shortName evidence="1">DHBP synthase</shortName>
            <ecNumber evidence="1">4.1.99.12</ecNumber>
        </recommendedName>
    </domain>
    <domain>
        <recommendedName>
            <fullName evidence="1">GTP cyclohydrolase-2</fullName>
            <ecNumber evidence="1">3.5.4.25</ecNumber>
        </recommendedName>
        <alternativeName>
            <fullName evidence="1">GTP cyclohydrolase II</fullName>
        </alternativeName>
    </domain>
</protein>
<accession>B0BTN8</accession>
<name>RIBBA_ACTPJ</name>
<reference key="1">
    <citation type="journal article" date="2008" name="PLoS ONE">
        <title>Genome biology of Actinobacillus pleuropneumoniae JL03, an isolate of serotype 3 prevalent in China.</title>
        <authorList>
            <person name="Xu Z."/>
            <person name="Zhou Y."/>
            <person name="Li L."/>
            <person name="Zhou R."/>
            <person name="Xiao S."/>
            <person name="Wan Y."/>
            <person name="Zhang S."/>
            <person name="Wang K."/>
            <person name="Li W."/>
            <person name="Li L."/>
            <person name="Jin H."/>
            <person name="Kang M."/>
            <person name="Dalai B."/>
            <person name="Li T."/>
            <person name="Liu L."/>
            <person name="Cheng Y."/>
            <person name="Zhang L."/>
            <person name="Xu T."/>
            <person name="Zheng H."/>
            <person name="Pu S."/>
            <person name="Wang B."/>
            <person name="Gu W."/>
            <person name="Zhang X.L."/>
            <person name="Zhu G.-F."/>
            <person name="Wang S."/>
            <person name="Zhao G.-P."/>
            <person name="Chen H."/>
        </authorList>
    </citation>
    <scope>NUCLEOTIDE SEQUENCE [LARGE SCALE GENOMIC DNA]</scope>
    <source>
        <strain>JL03</strain>
    </source>
</reference>
<organism>
    <name type="scientific">Actinobacillus pleuropneumoniae serotype 3 (strain JL03)</name>
    <dbReference type="NCBI Taxonomy" id="434271"/>
    <lineage>
        <taxon>Bacteria</taxon>
        <taxon>Pseudomonadati</taxon>
        <taxon>Pseudomonadota</taxon>
        <taxon>Gammaproteobacteria</taxon>
        <taxon>Pasteurellales</taxon>
        <taxon>Pasteurellaceae</taxon>
        <taxon>Actinobacillus</taxon>
    </lineage>
</organism>
<feature type="chain" id="PRO_1000140359" description="Riboflavin biosynthesis protein RibBA">
    <location>
        <begin position="1"/>
        <end position="401"/>
    </location>
</feature>
<feature type="region of interest" description="DHBP synthase">
    <location>
        <begin position="1"/>
        <end position="203"/>
    </location>
</feature>
<feature type="region of interest" description="GTP cyclohydrolase II">
    <location>
        <begin position="204"/>
        <end position="401"/>
    </location>
</feature>
<feature type="active site" description="Proton acceptor; for GTP cyclohydrolase activity" evidence="1">
    <location>
        <position position="331"/>
    </location>
</feature>
<feature type="active site" description="Nucleophile; for GTP cyclohydrolase activity" evidence="1">
    <location>
        <position position="333"/>
    </location>
</feature>
<feature type="binding site" evidence="1">
    <location>
        <begin position="30"/>
        <end position="31"/>
    </location>
    <ligand>
        <name>D-ribulose 5-phosphate</name>
        <dbReference type="ChEBI" id="CHEBI:58121"/>
    </ligand>
</feature>
<feature type="binding site" evidence="1">
    <location>
        <position position="31"/>
    </location>
    <ligand>
        <name>Mg(2+)</name>
        <dbReference type="ChEBI" id="CHEBI:18420"/>
        <label>1</label>
    </ligand>
</feature>
<feature type="binding site" evidence="1">
    <location>
        <position position="31"/>
    </location>
    <ligand>
        <name>Mg(2+)</name>
        <dbReference type="ChEBI" id="CHEBI:18420"/>
        <label>2</label>
    </ligand>
</feature>
<feature type="binding site" evidence="1">
    <location>
        <position position="35"/>
    </location>
    <ligand>
        <name>D-ribulose 5-phosphate</name>
        <dbReference type="ChEBI" id="CHEBI:58121"/>
    </ligand>
</feature>
<feature type="binding site" evidence="1">
    <location>
        <begin position="142"/>
        <end position="146"/>
    </location>
    <ligand>
        <name>D-ribulose 5-phosphate</name>
        <dbReference type="ChEBI" id="CHEBI:58121"/>
    </ligand>
</feature>
<feature type="binding site" evidence="1">
    <location>
        <position position="145"/>
    </location>
    <ligand>
        <name>Mg(2+)</name>
        <dbReference type="ChEBI" id="CHEBI:18420"/>
        <label>2</label>
    </ligand>
</feature>
<feature type="binding site" evidence="1">
    <location>
        <position position="166"/>
    </location>
    <ligand>
        <name>D-ribulose 5-phosphate</name>
        <dbReference type="ChEBI" id="CHEBI:58121"/>
    </ligand>
</feature>
<feature type="binding site" evidence="1">
    <location>
        <begin position="254"/>
        <end position="258"/>
    </location>
    <ligand>
        <name>GTP</name>
        <dbReference type="ChEBI" id="CHEBI:37565"/>
    </ligand>
</feature>
<feature type="binding site" evidence="1">
    <location>
        <position position="259"/>
    </location>
    <ligand>
        <name>Zn(2+)</name>
        <dbReference type="ChEBI" id="CHEBI:29105"/>
        <note>catalytic</note>
    </ligand>
</feature>
<feature type="binding site" evidence="1">
    <location>
        <position position="270"/>
    </location>
    <ligand>
        <name>Zn(2+)</name>
        <dbReference type="ChEBI" id="CHEBI:29105"/>
        <note>catalytic</note>
    </ligand>
</feature>
<feature type="binding site" evidence="1">
    <location>
        <position position="272"/>
    </location>
    <ligand>
        <name>Zn(2+)</name>
        <dbReference type="ChEBI" id="CHEBI:29105"/>
        <note>catalytic</note>
    </ligand>
</feature>
<feature type="binding site" evidence="1">
    <location>
        <position position="275"/>
    </location>
    <ligand>
        <name>GTP</name>
        <dbReference type="ChEBI" id="CHEBI:37565"/>
    </ligand>
</feature>
<feature type="binding site" evidence="1">
    <location>
        <begin position="297"/>
        <end position="299"/>
    </location>
    <ligand>
        <name>GTP</name>
        <dbReference type="ChEBI" id="CHEBI:37565"/>
    </ligand>
</feature>
<feature type="binding site" evidence="1">
    <location>
        <position position="319"/>
    </location>
    <ligand>
        <name>GTP</name>
        <dbReference type="ChEBI" id="CHEBI:37565"/>
    </ligand>
</feature>
<feature type="binding site" evidence="1">
    <location>
        <position position="354"/>
    </location>
    <ligand>
        <name>GTP</name>
        <dbReference type="ChEBI" id="CHEBI:37565"/>
    </ligand>
</feature>
<feature type="binding site" evidence="1">
    <location>
        <position position="359"/>
    </location>
    <ligand>
        <name>GTP</name>
        <dbReference type="ChEBI" id="CHEBI:37565"/>
    </ligand>
</feature>
<feature type="site" description="Essential for DHBP synthase activity" evidence="1">
    <location>
        <position position="128"/>
    </location>
</feature>
<feature type="site" description="Essential for DHBP synthase activity" evidence="1">
    <location>
        <position position="166"/>
    </location>
</feature>
<keyword id="KW-0342">GTP-binding</keyword>
<keyword id="KW-0378">Hydrolase</keyword>
<keyword id="KW-0456">Lyase</keyword>
<keyword id="KW-0460">Magnesium</keyword>
<keyword id="KW-0464">Manganese</keyword>
<keyword id="KW-0479">Metal-binding</keyword>
<keyword id="KW-0511">Multifunctional enzyme</keyword>
<keyword id="KW-0547">Nucleotide-binding</keyword>
<keyword id="KW-0686">Riboflavin biosynthesis</keyword>
<keyword id="KW-0862">Zinc</keyword>
<sequence>MTDFQFSKVEDAIEAIRQGKIILVTDDEDRENEGDFICAAEFATPENINFMATYGKGLICTPISTEIAKKLNFHPMVAVNQDNHETAFTVSVDHIDTGTGISAFERSITAMKIVDDNAKATDFRCPGHMFPLIAKDGGVLVRNGHTEATVDLARLAGLKHAGLCCEIMADDGTMMTMPDLQKFAVEHNMPFITIQQLQEYRRKHDSLVKQISVVKMPTKYGEFMAHSFVEVISGKEHVALVKGDLTDGEQVLARIHSECLTGDAFGSQRCDCGQQFAAAMTQIEQEGRGVILYLRQEGRGIGLINKLRAYELQDKGMDTVEANVALGFKEDEREYYIGAQMFQQLGVKSIRLLTNNPAKIEGLKEQGLNIVAREPIIVEPNKNDIDYLKVKQIKMGHMFNF</sequence>
<comment type="function">
    <text evidence="1">Catalyzes the conversion of D-ribulose 5-phosphate to formate and 3,4-dihydroxy-2-butanone 4-phosphate.</text>
</comment>
<comment type="function">
    <text evidence="1">Catalyzes the conversion of GTP to 2,5-diamino-6-ribosylamino-4(3H)-pyrimidinone 5'-phosphate (DARP), formate and pyrophosphate.</text>
</comment>
<comment type="catalytic activity">
    <reaction evidence="1">
        <text>D-ribulose 5-phosphate = (2S)-2-hydroxy-3-oxobutyl phosphate + formate + H(+)</text>
        <dbReference type="Rhea" id="RHEA:18457"/>
        <dbReference type="ChEBI" id="CHEBI:15378"/>
        <dbReference type="ChEBI" id="CHEBI:15740"/>
        <dbReference type="ChEBI" id="CHEBI:58121"/>
        <dbReference type="ChEBI" id="CHEBI:58830"/>
        <dbReference type="EC" id="4.1.99.12"/>
    </reaction>
</comment>
<comment type="catalytic activity">
    <reaction evidence="1">
        <text>GTP + 4 H2O = 2,5-diamino-6-hydroxy-4-(5-phosphoribosylamino)-pyrimidine + formate + 2 phosphate + 3 H(+)</text>
        <dbReference type="Rhea" id="RHEA:23704"/>
        <dbReference type="ChEBI" id="CHEBI:15377"/>
        <dbReference type="ChEBI" id="CHEBI:15378"/>
        <dbReference type="ChEBI" id="CHEBI:15740"/>
        <dbReference type="ChEBI" id="CHEBI:37565"/>
        <dbReference type="ChEBI" id="CHEBI:43474"/>
        <dbReference type="ChEBI" id="CHEBI:58614"/>
        <dbReference type="EC" id="3.5.4.25"/>
    </reaction>
</comment>
<comment type="cofactor">
    <cofactor evidence="1">
        <name>Mg(2+)</name>
        <dbReference type="ChEBI" id="CHEBI:18420"/>
    </cofactor>
    <cofactor evidence="1">
        <name>Mn(2+)</name>
        <dbReference type="ChEBI" id="CHEBI:29035"/>
    </cofactor>
    <text evidence="1">Binds 2 divalent metal cations per subunit. Magnesium or manganese.</text>
</comment>
<comment type="cofactor">
    <cofactor evidence="1">
        <name>Zn(2+)</name>
        <dbReference type="ChEBI" id="CHEBI:29105"/>
    </cofactor>
    <text evidence="1">Binds 1 zinc ion per subunit.</text>
</comment>
<comment type="pathway">
    <text evidence="1">Cofactor biosynthesis; riboflavin biosynthesis; 2-hydroxy-3-oxobutyl phosphate from D-ribulose 5-phosphate: step 1/1.</text>
</comment>
<comment type="pathway">
    <text evidence="1">Cofactor biosynthesis; riboflavin biosynthesis; 5-amino-6-(D-ribitylamino)uracil from GTP: step 1/4.</text>
</comment>
<comment type="similarity">
    <text evidence="1">In the N-terminal section; belongs to the DHBP synthase family.</text>
</comment>
<comment type="similarity">
    <text evidence="1">In the C-terminal section; belongs to the GTP cyclohydrolase II family.</text>
</comment>
<dbReference type="EC" id="4.1.99.12" evidence="1"/>
<dbReference type="EC" id="3.5.4.25" evidence="1"/>
<dbReference type="EMBL" id="CP000687">
    <property type="protein sequence ID" value="ABY68993.1"/>
    <property type="molecule type" value="Genomic_DNA"/>
</dbReference>
<dbReference type="RefSeq" id="WP_005596392.1">
    <property type="nucleotide sequence ID" value="NC_010278.1"/>
</dbReference>
<dbReference type="SMR" id="B0BTN8"/>
<dbReference type="KEGG" id="apj:APJL_0404"/>
<dbReference type="HOGENOM" id="CLU_020273_1_2_6"/>
<dbReference type="UniPathway" id="UPA00275">
    <property type="reaction ID" value="UER00399"/>
</dbReference>
<dbReference type="UniPathway" id="UPA00275">
    <property type="reaction ID" value="UER00400"/>
</dbReference>
<dbReference type="Proteomes" id="UP000008547">
    <property type="component" value="Chromosome"/>
</dbReference>
<dbReference type="GO" id="GO:0005829">
    <property type="term" value="C:cytosol"/>
    <property type="evidence" value="ECO:0007669"/>
    <property type="project" value="TreeGrafter"/>
</dbReference>
<dbReference type="GO" id="GO:0008686">
    <property type="term" value="F:3,4-dihydroxy-2-butanone-4-phosphate synthase activity"/>
    <property type="evidence" value="ECO:0007669"/>
    <property type="project" value="UniProtKB-UniRule"/>
</dbReference>
<dbReference type="GO" id="GO:0005525">
    <property type="term" value="F:GTP binding"/>
    <property type="evidence" value="ECO:0007669"/>
    <property type="project" value="UniProtKB-KW"/>
</dbReference>
<dbReference type="GO" id="GO:0003935">
    <property type="term" value="F:GTP cyclohydrolase II activity"/>
    <property type="evidence" value="ECO:0007669"/>
    <property type="project" value="UniProtKB-UniRule"/>
</dbReference>
<dbReference type="GO" id="GO:0000287">
    <property type="term" value="F:magnesium ion binding"/>
    <property type="evidence" value="ECO:0007669"/>
    <property type="project" value="UniProtKB-UniRule"/>
</dbReference>
<dbReference type="GO" id="GO:0030145">
    <property type="term" value="F:manganese ion binding"/>
    <property type="evidence" value="ECO:0007669"/>
    <property type="project" value="UniProtKB-UniRule"/>
</dbReference>
<dbReference type="GO" id="GO:0008270">
    <property type="term" value="F:zinc ion binding"/>
    <property type="evidence" value="ECO:0007669"/>
    <property type="project" value="UniProtKB-UniRule"/>
</dbReference>
<dbReference type="GO" id="GO:0009231">
    <property type="term" value="P:riboflavin biosynthetic process"/>
    <property type="evidence" value="ECO:0007669"/>
    <property type="project" value="UniProtKB-UniRule"/>
</dbReference>
<dbReference type="CDD" id="cd00641">
    <property type="entry name" value="GTP_cyclohydro2"/>
    <property type="match status" value="1"/>
</dbReference>
<dbReference type="FunFam" id="3.40.50.10990:FF:000002">
    <property type="entry name" value="GTP cyclohydrolase-2"/>
    <property type="match status" value="1"/>
</dbReference>
<dbReference type="FunFam" id="3.90.870.10:FF:000001">
    <property type="entry name" value="Riboflavin biosynthesis protein RibBA"/>
    <property type="match status" value="1"/>
</dbReference>
<dbReference type="Gene3D" id="3.90.870.10">
    <property type="entry name" value="DHBP synthase"/>
    <property type="match status" value="1"/>
</dbReference>
<dbReference type="Gene3D" id="3.40.50.10990">
    <property type="entry name" value="GTP cyclohydrolase II"/>
    <property type="match status" value="1"/>
</dbReference>
<dbReference type="HAMAP" id="MF_00179">
    <property type="entry name" value="RibA"/>
    <property type="match status" value="1"/>
</dbReference>
<dbReference type="HAMAP" id="MF_00180">
    <property type="entry name" value="RibB"/>
    <property type="match status" value="1"/>
</dbReference>
<dbReference type="HAMAP" id="MF_01283">
    <property type="entry name" value="RibBA"/>
    <property type="match status" value="1"/>
</dbReference>
<dbReference type="InterPro" id="IPR017945">
    <property type="entry name" value="DHBP_synth_RibB-like_a/b_dom"/>
</dbReference>
<dbReference type="InterPro" id="IPR000422">
    <property type="entry name" value="DHBP_synthase_RibB"/>
</dbReference>
<dbReference type="InterPro" id="IPR032677">
    <property type="entry name" value="GTP_cyclohydro_II"/>
</dbReference>
<dbReference type="InterPro" id="IPR000926">
    <property type="entry name" value="RibA"/>
</dbReference>
<dbReference type="InterPro" id="IPR036144">
    <property type="entry name" value="RibA-like_sf"/>
</dbReference>
<dbReference type="InterPro" id="IPR016299">
    <property type="entry name" value="Riboflavin_synth_RibBA"/>
</dbReference>
<dbReference type="NCBIfam" id="NF001591">
    <property type="entry name" value="PRK00393.1"/>
    <property type="match status" value="1"/>
</dbReference>
<dbReference type="NCBIfam" id="NF006803">
    <property type="entry name" value="PRK09311.1"/>
    <property type="match status" value="1"/>
</dbReference>
<dbReference type="NCBIfam" id="TIGR00505">
    <property type="entry name" value="ribA"/>
    <property type="match status" value="1"/>
</dbReference>
<dbReference type="NCBIfam" id="TIGR00506">
    <property type="entry name" value="ribB"/>
    <property type="match status" value="1"/>
</dbReference>
<dbReference type="PANTHER" id="PTHR21327:SF18">
    <property type="entry name" value="3,4-DIHYDROXY-2-BUTANONE 4-PHOSPHATE SYNTHASE"/>
    <property type="match status" value="1"/>
</dbReference>
<dbReference type="PANTHER" id="PTHR21327">
    <property type="entry name" value="GTP CYCLOHYDROLASE II-RELATED"/>
    <property type="match status" value="1"/>
</dbReference>
<dbReference type="Pfam" id="PF00926">
    <property type="entry name" value="DHBP_synthase"/>
    <property type="match status" value="1"/>
</dbReference>
<dbReference type="Pfam" id="PF00925">
    <property type="entry name" value="GTP_cyclohydro2"/>
    <property type="match status" value="1"/>
</dbReference>
<dbReference type="PIRSF" id="PIRSF001259">
    <property type="entry name" value="RibA"/>
    <property type="match status" value="1"/>
</dbReference>
<dbReference type="SUPFAM" id="SSF142695">
    <property type="entry name" value="RibA-like"/>
    <property type="match status" value="1"/>
</dbReference>
<dbReference type="SUPFAM" id="SSF55821">
    <property type="entry name" value="YrdC/RibB"/>
    <property type="match status" value="1"/>
</dbReference>